<organismHost>
    <name type="scientific">Acanthamoeba polyphaga</name>
    <name type="common">Amoeba</name>
    <dbReference type="NCBI Taxonomy" id="5757"/>
</organismHost>
<gene>
    <name type="ordered locus">MIMI_R391</name>
</gene>
<sequence>MEQDYLTIDETINIINLNTVNLTQYIDSKTLLIFDNNILLESKFISLQEIFNLLDFILFDIIDFLVKSVLPKIPIVNYNYRITGNKAYERFVDLDTNKILSPTFDIEIVDSIDKIIDFSKIFQHS</sequence>
<name>YR391_MIMIV</name>
<protein>
    <recommendedName>
        <fullName>Uncharacterized protein R391</fullName>
    </recommendedName>
</protein>
<dbReference type="EMBL" id="AY653733">
    <property type="protein sequence ID" value="AAV50660.1"/>
    <property type="molecule type" value="Genomic_DNA"/>
</dbReference>
<dbReference type="Proteomes" id="UP000001134">
    <property type="component" value="Genome"/>
</dbReference>
<keyword id="KW-1185">Reference proteome</keyword>
<reference key="1">
    <citation type="journal article" date="2004" name="Science">
        <title>The 1.2-megabase genome sequence of Mimivirus.</title>
        <authorList>
            <person name="Raoult D."/>
            <person name="Audic S."/>
            <person name="Robert C."/>
            <person name="Abergel C."/>
            <person name="Renesto P."/>
            <person name="Ogata H."/>
            <person name="La Scola B."/>
            <person name="Susan M."/>
            <person name="Claverie J.-M."/>
        </authorList>
    </citation>
    <scope>NUCLEOTIDE SEQUENCE [LARGE SCALE GENOMIC DNA]</scope>
    <source>
        <strain>Rowbotham-Bradford</strain>
    </source>
</reference>
<proteinExistence type="predicted"/>
<accession>Q5UQ43</accession>
<organism>
    <name type="scientific">Acanthamoeba polyphaga mimivirus</name>
    <name type="common">APMV</name>
    <dbReference type="NCBI Taxonomy" id="212035"/>
    <lineage>
        <taxon>Viruses</taxon>
        <taxon>Varidnaviria</taxon>
        <taxon>Bamfordvirae</taxon>
        <taxon>Nucleocytoviricota</taxon>
        <taxon>Megaviricetes</taxon>
        <taxon>Imitervirales</taxon>
        <taxon>Mimiviridae</taxon>
        <taxon>Megamimivirinae</taxon>
        <taxon>Mimivirus</taxon>
        <taxon>Mimivirus bradfordmassiliense</taxon>
    </lineage>
</organism>
<feature type="chain" id="PRO_0000251116" description="Uncharacterized protein R391">
    <location>
        <begin position="1"/>
        <end position="125"/>
    </location>
</feature>